<name>ISPD_CLOPS</name>
<gene>
    <name evidence="1" type="primary">ispD</name>
    <name type="ordered locus">CPR_2426</name>
</gene>
<keyword id="KW-0414">Isoprene biosynthesis</keyword>
<keyword id="KW-0548">Nucleotidyltransferase</keyword>
<keyword id="KW-0808">Transferase</keyword>
<accession>Q0SQB9</accession>
<feature type="chain" id="PRO_1000022919" description="2-C-methyl-D-erythritol 4-phosphate cytidylyltransferase">
    <location>
        <begin position="1"/>
        <end position="225"/>
    </location>
</feature>
<feature type="site" description="Transition state stabilizer" evidence="1">
    <location>
        <position position="16"/>
    </location>
</feature>
<feature type="site" description="Transition state stabilizer" evidence="1">
    <location>
        <position position="23"/>
    </location>
</feature>
<feature type="site" description="Positions MEP for the nucleophilic attack" evidence="1">
    <location>
        <position position="154"/>
    </location>
</feature>
<feature type="site" description="Positions MEP for the nucleophilic attack" evidence="1">
    <location>
        <position position="210"/>
    </location>
</feature>
<reference key="1">
    <citation type="journal article" date="2006" name="Genome Res.">
        <title>Skewed genomic variability in strains of the toxigenic bacterial pathogen, Clostridium perfringens.</title>
        <authorList>
            <person name="Myers G.S.A."/>
            <person name="Rasko D.A."/>
            <person name="Cheung J.K."/>
            <person name="Ravel J."/>
            <person name="Seshadri R."/>
            <person name="DeBoy R.T."/>
            <person name="Ren Q."/>
            <person name="Varga J."/>
            <person name="Awad M.M."/>
            <person name="Brinkac L.M."/>
            <person name="Daugherty S.C."/>
            <person name="Haft D.H."/>
            <person name="Dodson R.J."/>
            <person name="Madupu R."/>
            <person name="Nelson W.C."/>
            <person name="Rosovitz M.J."/>
            <person name="Sullivan S.A."/>
            <person name="Khouri H."/>
            <person name="Dimitrov G.I."/>
            <person name="Watkins K.L."/>
            <person name="Mulligan S."/>
            <person name="Benton J."/>
            <person name="Radune D."/>
            <person name="Fisher D.J."/>
            <person name="Atkins H.S."/>
            <person name="Hiscox T."/>
            <person name="Jost B.H."/>
            <person name="Billington S.J."/>
            <person name="Songer J.G."/>
            <person name="McClane B.A."/>
            <person name="Titball R.W."/>
            <person name="Rood J.I."/>
            <person name="Melville S.B."/>
            <person name="Paulsen I.T."/>
        </authorList>
    </citation>
    <scope>NUCLEOTIDE SEQUENCE [LARGE SCALE GENOMIC DNA]</scope>
    <source>
        <strain>SM101 / Type A</strain>
    </source>
</reference>
<evidence type="ECO:0000255" key="1">
    <source>
        <dbReference type="HAMAP-Rule" id="MF_00108"/>
    </source>
</evidence>
<protein>
    <recommendedName>
        <fullName evidence="1">2-C-methyl-D-erythritol 4-phosphate cytidylyltransferase</fullName>
        <ecNumber evidence="1">2.7.7.60</ecNumber>
    </recommendedName>
    <alternativeName>
        <fullName evidence="1">4-diphosphocytidyl-2C-methyl-D-erythritol synthase</fullName>
    </alternativeName>
    <alternativeName>
        <fullName evidence="1">MEP cytidylyltransferase</fullName>
        <shortName evidence="1">MCT</shortName>
    </alternativeName>
</protein>
<proteinExistence type="inferred from homology"/>
<dbReference type="EC" id="2.7.7.60" evidence="1"/>
<dbReference type="EMBL" id="CP000312">
    <property type="protein sequence ID" value="ABG87076.1"/>
    <property type="molecule type" value="Genomic_DNA"/>
</dbReference>
<dbReference type="RefSeq" id="WP_011593147.1">
    <property type="nucleotide sequence ID" value="NC_008262.1"/>
</dbReference>
<dbReference type="SMR" id="Q0SQB9"/>
<dbReference type="KEGG" id="cpr:CPR_2426"/>
<dbReference type="UniPathway" id="UPA00056">
    <property type="reaction ID" value="UER00093"/>
</dbReference>
<dbReference type="Proteomes" id="UP000001824">
    <property type="component" value="Chromosome"/>
</dbReference>
<dbReference type="GO" id="GO:0050518">
    <property type="term" value="F:2-C-methyl-D-erythritol 4-phosphate cytidylyltransferase activity"/>
    <property type="evidence" value="ECO:0007669"/>
    <property type="project" value="UniProtKB-UniRule"/>
</dbReference>
<dbReference type="GO" id="GO:0019288">
    <property type="term" value="P:isopentenyl diphosphate biosynthetic process, methylerythritol 4-phosphate pathway"/>
    <property type="evidence" value="ECO:0007669"/>
    <property type="project" value="UniProtKB-UniRule"/>
</dbReference>
<dbReference type="CDD" id="cd02516">
    <property type="entry name" value="CDP-ME_synthetase"/>
    <property type="match status" value="1"/>
</dbReference>
<dbReference type="FunFam" id="3.90.550.10:FF:000003">
    <property type="entry name" value="2-C-methyl-D-erythritol 4-phosphate cytidylyltransferase"/>
    <property type="match status" value="1"/>
</dbReference>
<dbReference type="Gene3D" id="3.90.550.10">
    <property type="entry name" value="Spore Coat Polysaccharide Biosynthesis Protein SpsA, Chain A"/>
    <property type="match status" value="1"/>
</dbReference>
<dbReference type="HAMAP" id="MF_00108">
    <property type="entry name" value="IspD"/>
    <property type="match status" value="1"/>
</dbReference>
<dbReference type="InterPro" id="IPR001228">
    <property type="entry name" value="IspD"/>
</dbReference>
<dbReference type="InterPro" id="IPR034683">
    <property type="entry name" value="IspD/TarI"/>
</dbReference>
<dbReference type="InterPro" id="IPR050088">
    <property type="entry name" value="IspD/TarI_cytidylyltransf_bact"/>
</dbReference>
<dbReference type="InterPro" id="IPR018294">
    <property type="entry name" value="ISPD_synthase_CS"/>
</dbReference>
<dbReference type="InterPro" id="IPR029044">
    <property type="entry name" value="Nucleotide-diphossugar_trans"/>
</dbReference>
<dbReference type="NCBIfam" id="TIGR00453">
    <property type="entry name" value="ispD"/>
    <property type="match status" value="1"/>
</dbReference>
<dbReference type="NCBIfam" id="NF001183">
    <property type="entry name" value="PRK00155.1-3"/>
    <property type="match status" value="1"/>
</dbReference>
<dbReference type="PANTHER" id="PTHR32125">
    <property type="entry name" value="2-C-METHYL-D-ERYTHRITOL 4-PHOSPHATE CYTIDYLYLTRANSFERASE, CHLOROPLASTIC"/>
    <property type="match status" value="1"/>
</dbReference>
<dbReference type="PANTHER" id="PTHR32125:SF4">
    <property type="entry name" value="2-C-METHYL-D-ERYTHRITOL 4-PHOSPHATE CYTIDYLYLTRANSFERASE, CHLOROPLASTIC"/>
    <property type="match status" value="1"/>
</dbReference>
<dbReference type="Pfam" id="PF01128">
    <property type="entry name" value="IspD"/>
    <property type="match status" value="1"/>
</dbReference>
<dbReference type="SUPFAM" id="SSF53448">
    <property type="entry name" value="Nucleotide-diphospho-sugar transferases"/>
    <property type="match status" value="1"/>
</dbReference>
<dbReference type="PROSITE" id="PS01295">
    <property type="entry name" value="ISPD"/>
    <property type="match status" value="1"/>
</dbReference>
<comment type="function">
    <text evidence="1">Catalyzes the formation of 4-diphosphocytidyl-2-C-methyl-D-erythritol from CTP and 2-C-methyl-D-erythritol 4-phosphate (MEP).</text>
</comment>
<comment type="catalytic activity">
    <reaction evidence="1">
        <text>2-C-methyl-D-erythritol 4-phosphate + CTP + H(+) = 4-CDP-2-C-methyl-D-erythritol + diphosphate</text>
        <dbReference type="Rhea" id="RHEA:13429"/>
        <dbReference type="ChEBI" id="CHEBI:15378"/>
        <dbReference type="ChEBI" id="CHEBI:33019"/>
        <dbReference type="ChEBI" id="CHEBI:37563"/>
        <dbReference type="ChEBI" id="CHEBI:57823"/>
        <dbReference type="ChEBI" id="CHEBI:58262"/>
        <dbReference type="EC" id="2.7.7.60"/>
    </reaction>
</comment>
<comment type="pathway">
    <text evidence="1">Isoprenoid biosynthesis; isopentenyl diphosphate biosynthesis via DXP pathway; isopentenyl diphosphate from 1-deoxy-D-xylulose 5-phosphate: step 2/6.</text>
</comment>
<comment type="similarity">
    <text evidence="1">Belongs to the IspD/TarI cytidylyltransferase family. IspD subfamily.</text>
</comment>
<organism>
    <name type="scientific">Clostridium perfringens (strain SM101 / Type A)</name>
    <dbReference type="NCBI Taxonomy" id="289380"/>
    <lineage>
        <taxon>Bacteria</taxon>
        <taxon>Bacillati</taxon>
        <taxon>Bacillota</taxon>
        <taxon>Clostridia</taxon>
        <taxon>Eubacteriales</taxon>
        <taxon>Clostridiaceae</taxon>
        <taxon>Clostridium</taxon>
    </lineage>
</organism>
<sequence>MGKVVSVILAGGKGKRMGAEVSKQFIEINGKPIIYYTLKAFEECKDIDEIILVLPKDEIDYFKREIEPRFDFKISKIIEGGKERQDSVYNALNSIGDCDIVLIHDGARAFVSNKIIEDGIKYSREFGAAAPGVMPKDTIKVKNLEGFSVDTPNRASLVAVQTPQCFKYNLIKKGHNKVKNEKIQVTDDTMIVELLGEKVYLFEGDYKNIKVTTPEDLILAEHFVK</sequence>